<accession>Q0TJ63</accession>
<proteinExistence type="inferred from homology"/>
<comment type="catalytic activity">
    <reaction evidence="1">
        <text>a quinone + NADH + H(+) = a quinol + NAD(+)</text>
        <dbReference type="Rhea" id="RHEA:46160"/>
        <dbReference type="ChEBI" id="CHEBI:15378"/>
        <dbReference type="ChEBI" id="CHEBI:24646"/>
        <dbReference type="ChEBI" id="CHEBI:57540"/>
        <dbReference type="ChEBI" id="CHEBI:57945"/>
        <dbReference type="ChEBI" id="CHEBI:132124"/>
        <dbReference type="EC" id="1.6.5.2"/>
    </reaction>
</comment>
<comment type="catalytic activity">
    <reaction evidence="1">
        <text>a quinone + NADPH + H(+) = a quinol + NADP(+)</text>
        <dbReference type="Rhea" id="RHEA:46164"/>
        <dbReference type="ChEBI" id="CHEBI:15378"/>
        <dbReference type="ChEBI" id="CHEBI:24646"/>
        <dbReference type="ChEBI" id="CHEBI:57783"/>
        <dbReference type="ChEBI" id="CHEBI:58349"/>
        <dbReference type="ChEBI" id="CHEBI:132124"/>
        <dbReference type="EC" id="1.6.5.2"/>
    </reaction>
</comment>
<comment type="cofactor">
    <cofactor evidence="1">
        <name>FMN</name>
        <dbReference type="ChEBI" id="CHEBI:58210"/>
    </cofactor>
    <text evidence="1">Binds 1 FMN per monomer.</text>
</comment>
<comment type="similarity">
    <text evidence="1">Belongs to the WrbA family.</text>
</comment>
<evidence type="ECO:0000255" key="1">
    <source>
        <dbReference type="HAMAP-Rule" id="MF_01017"/>
    </source>
</evidence>
<gene>
    <name type="ordered locus">ECP_1003</name>
</gene>
<feature type="chain" id="PRO_0000291015" description="NAD(P)H dehydrogenase (quinone)">
    <location>
        <begin position="1"/>
        <end position="198"/>
    </location>
</feature>
<feature type="domain" description="Flavodoxin-like" evidence="1">
    <location>
        <begin position="4"/>
        <end position="189"/>
    </location>
</feature>
<feature type="binding site" evidence="1">
    <location>
        <begin position="10"/>
        <end position="15"/>
    </location>
    <ligand>
        <name>FMN</name>
        <dbReference type="ChEBI" id="CHEBI:58210"/>
    </ligand>
</feature>
<feature type="binding site" evidence="1">
    <location>
        <position position="12"/>
    </location>
    <ligand>
        <name>NAD(+)</name>
        <dbReference type="ChEBI" id="CHEBI:57540"/>
    </ligand>
</feature>
<feature type="binding site" evidence="1">
    <location>
        <begin position="78"/>
        <end position="80"/>
    </location>
    <ligand>
        <name>FMN</name>
        <dbReference type="ChEBI" id="CHEBI:58210"/>
    </ligand>
</feature>
<feature type="binding site" evidence="1">
    <location>
        <position position="98"/>
    </location>
    <ligand>
        <name>substrate</name>
    </ligand>
</feature>
<feature type="binding site" evidence="1">
    <location>
        <begin position="113"/>
        <end position="118"/>
    </location>
    <ligand>
        <name>FMN</name>
        <dbReference type="ChEBI" id="CHEBI:58210"/>
    </ligand>
</feature>
<feature type="binding site" evidence="1">
    <location>
        <position position="133"/>
    </location>
    <ligand>
        <name>FMN</name>
        <dbReference type="ChEBI" id="CHEBI:58210"/>
    </ligand>
</feature>
<name>NQOR_ECOL5</name>
<organism>
    <name type="scientific">Escherichia coli O6:K15:H31 (strain 536 / UPEC)</name>
    <dbReference type="NCBI Taxonomy" id="362663"/>
    <lineage>
        <taxon>Bacteria</taxon>
        <taxon>Pseudomonadati</taxon>
        <taxon>Pseudomonadota</taxon>
        <taxon>Gammaproteobacteria</taxon>
        <taxon>Enterobacterales</taxon>
        <taxon>Enterobacteriaceae</taxon>
        <taxon>Escherichia</taxon>
    </lineage>
</organism>
<dbReference type="EC" id="1.6.5.2" evidence="1"/>
<dbReference type="EMBL" id="CP000247">
    <property type="protein sequence ID" value="ABG69016.1"/>
    <property type="molecule type" value="Genomic_DNA"/>
</dbReference>
<dbReference type="SMR" id="Q0TJ63"/>
<dbReference type="KEGG" id="ecp:ECP_1003"/>
<dbReference type="HOGENOM" id="CLU_051402_0_2_6"/>
<dbReference type="Proteomes" id="UP000009182">
    <property type="component" value="Chromosome"/>
</dbReference>
<dbReference type="GO" id="GO:0016020">
    <property type="term" value="C:membrane"/>
    <property type="evidence" value="ECO:0007669"/>
    <property type="project" value="TreeGrafter"/>
</dbReference>
<dbReference type="GO" id="GO:0050660">
    <property type="term" value="F:flavin adenine dinucleotide binding"/>
    <property type="evidence" value="ECO:0007669"/>
    <property type="project" value="UniProtKB-UniRule"/>
</dbReference>
<dbReference type="GO" id="GO:0010181">
    <property type="term" value="F:FMN binding"/>
    <property type="evidence" value="ECO:0007669"/>
    <property type="project" value="InterPro"/>
</dbReference>
<dbReference type="GO" id="GO:0051287">
    <property type="term" value="F:NAD binding"/>
    <property type="evidence" value="ECO:0007669"/>
    <property type="project" value="UniProtKB-UniRule"/>
</dbReference>
<dbReference type="GO" id="GO:0050136">
    <property type="term" value="F:NADH:ubiquinone reductase (non-electrogenic) activity"/>
    <property type="evidence" value="ECO:0007669"/>
    <property type="project" value="RHEA"/>
</dbReference>
<dbReference type="GO" id="GO:0050661">
    <property type="term" value="F:NADP binding"/>
    <property type="evidence" value="ECO:0007669"/>
    <property type="project" value="UniProtKB-UniRule"/>
</dbReference>
<dbReference type="GO" id="GO:0008753">
    <property type="term" value="F:NADPH dehydrogenase (quinone) activity"/>
    <property type="evidence" value="ECO:0007669"/>
    <property type="project" value="RHEA"/>
</dbReference>
<dbReference type="FunFam" id="3.40.50.360:FF:000004">
    <property type="entry name" value="NAD(P)H dehydrogenase (quinone)"/>
    <property type="match status" value="1"/>
</dbReference>
<dbReference type="Gene3D" id="3.40.50.360">
    <property type="match status" value="1"/>
</dbReference>
<dbReference type="HAMAP" id="MF_01017">
    <property type="entry name" value="NQOR"/>
    <property type="match status" value="1"/>
</dbReference>
<dbReference type="InterPro" id="IPR008254">
    <property type="entry name" value="Flavodoxin/NO_synth"/>
</dbReference>
<dbReference type="InterPro" id="IPR029039">
    <property type="entry name" value="Flavoprotein-like_sf"/>
</dbReference>
<dbReference type="InterPro" id="IPR010089">
    <property type="entry name" value="Flavoprotein_WrbA-like"/>
</dbReference>
<dbReference type="InterPro" id="IPR005025">
    <property type="entry name" value="FMN_Rdtase-like_dom"/>
</dbReference>
<dbReference type="InterPro" id="IPR037513">
    <property type="entry name" value="NQO"/>
</dbReference>
<dbReference type="NCBIfam" id="TIGR01755">
    <property type="entry name" value="flav_wrbA"/>
    <property type="match status" value="1"/>
</dbReference>
<dbReference type="NCBIfam" id="NF002999">
    <property type="entry name" value="PRK03767.1"/>
    <property type="match status" value="1"/>
</dbReference>
<dbReference type="PANTHER" id="PTHR30546">
    <property type="entry name" value="FLAVODOXIN-RELATED PROTEIN WRBA-RELATED"/>
    <property type="match status" value="1"/>
</dbReference>
<dbReference type="PANTHER" id="PTHR30546:SF23">
    <property type="entry name" value="FLAVOPROTEIN-LIKE PROTEIN YCP4-RELATED"/>
    <property type="match status" value="1"/>
</dbReference>
<dbReference type="Pfam" id="PF03358">
    <property type="entry name" value="FMN_red"/>
    <property type="match status" value="1"/>
</dbReference>
<dbReference type="SUPFAM" id="SSF52218">
    <property type="entry name" value="Flavoproteins"/>
    <property type="match status" value="1"/>
</dbReference>
<dbReference type="PROSITE" id="PS50902">
    <property type="entry name" value="FLAVODOXIN_LIKE"/>
    <property type="match status" value="1"/>
</dbReference>
<sequence length="198" mass="20846">MAKVLVLYYSMYGHIETMARAVAEGASKVDGAEVVVKRVPETMPPQLFEKAGGKTQTAPVATPQELADYDAIIFGTPTRFGNMSGQMRTFLDQTGGLWASGALYGKLASVFSSTGTGGGQEQTITSTWTTLAHHGMVIVPIGYAAQELFDVSQVRGGTPYGATTIAGGDGSRQPSQEELSIARYQGEYVAGLAVKLNG</sequence>
<keyword id="KW-0285">Flavoprotein</keyword>
<keyword id="KW-0288">FMN</keyword>
<keyword id="KW-0520">NAD</keyword>
<keyword id="KW-0521">NADP</keyword>
<keyword id="KW-0547">Nucleotide-binding</keyword>
<keyword id="KW-0560">Oxidoreductase</keyword>
<reference key="1">
    <citation type="journal article" date="2006" name="Mol. Microbiol.">
        <title>Role of pathogenicity island-associated integrases in the genome plasticity of uropathogenic Escherichia coli strain 536.</title>
        <authorList>
            <person name="Hochhut B."/>
            <person name="Wilde C."/>
            <person name="Balling G."/>
            <person name="Middendorf B."/>
            <person name="Dobrindt U."/>
            <person name="Brzuszkiewicz E."/>
            <person name="Gottschalk G."/>
            <person name="Carniel E."/>
            <person name="Hacker J."/>
        </authorList>
    </citation>
    <scope>NUCLEOTIDE SEQUENCE [LARGE SCALE GENOMIC DNA]</scope>
    <source>
        <strain>536 / UPEC</strain>
    </source>
</reference>
<protein>
    <recommendedName>
        <fullName evidence="1">NAD(P)H dehydrogenase (quinone)</fullName>
        <ecNumber evidence="1">1.6.5.2</ecNumber>
    </recommendedName>
    <alternativeName>
        <fullName>Flavoprotein WrbA</fullName>
    </alternativeName>
    <alternativeName>
        <fullName evidence="1">NAD(P)H:quinone oxidoreductase</fullName>
        <shortName evidence="1">NQO</shortName>
    </alternativeName>
</protein>